<evidence type="ECO:0000255" key="1">
    <source>
        <dbReference type="HAMAP-Rule" id="MF_04004"/>
    </source>
</evidence>
<protein>
    <recommendedName>
        <fullName evidence="1">Protein E7</fullName>
    </recommendedName>
</protein>
<gene>
    <name evidence="1" type="primary">E7</name>
</gene>
<comment type="function">
    <text evidence="1">Plays a role in viral genome replication by driving entry of quiescent cells into the cell cycle. Stimulation of progression from G1 to S phase allows the virus to efficiently use the cellular DNA replicating machinery to achieve viral genome replication. E7 protein has both transforming and trans-activating activities. Induces the disassembly of the E2F1 transcription factor from RB1, with subsequent transcriptional activation of E2F1-regulated S-phase genes. Interferes with host histone deacetylation mediated by HDAC1 and HDAC2, leading to transcription activation. Also plays a role in the inhibition of both antiviral and antiproliferative functions of host interferon alpha. Interaction with host TMEM173/STING impairs the ability of TMEM173/STING to sense cytosolic DNA and promote the production of type I interferon (IFN-alpha and IFN-beta).</text>
</comment>
<comment type="subunit">
    <text evidence="1">Homodimer. Homooligomer. Interacts with host RB1; this interaction induces dissociation of RB1-E2F1 complex thereby disrupting RB1 activity. Interacts with host EP300; this interaction represses EP300 transcriptional activity. Interacts with protein E2; this interaction inhibits E7 oncogenic activity. Interacts with host TMEM173/STING; this interaction impairs the ability of TMEM173/STING to sense cytosolic DNA and promote the production of type I interferon (IFN-alpha and IFN-beta).</text>
</comment>
<comment type="subcellular location">
    <subcellularLocation>
        <location evidence="1">Host cytoplasm</location>
    </subcellularLocation>
    <subcellularLocation>
        <location evidence="1">Host nucleus</location>
    </subcellularLocation>
    <text evidence="1">Predominantly found in the host nucleus.</text>
</comment>
<comment type="domain">
    <text evidence="1">The E7 terminal domain is an intrinsically disordered domain, whose flexibility and conformational transitions confer target adaptability to the oncoprotein. It allows adaptation to a variety of protein targets and exposes the PEST degradation sequence that regulates its turnover in the cell.</text>
</comment>
<comment type="PTM">
    <text evidence="1">Highly phosphorylated.</text>
</comment>
<comment type="similarity">
    <text evidence="1">Belongs to the papillomaviridae E7 protein family.</text>
</comment>
<accession>P06932</accession>
<accession>Q6LBH5</accession>
<accession>Q6YNY3</accession>
<accession>Q81963</accession>
<accession>Q81987</accession>
<organism>
    <name type="scientific">Human papillomavirus 5</name>
    <dbReference type="NCBI Taxonomy" id="333923"/>
    <lineage>
        <taxon>Viruses</taxon>
        <taxon>Monodnaviria</taxon>
        <taxon>Shotokuvirae</taxon>
        <taxon>Cossaviricota</taxon>
        <taxon>Papovaviricetes</taxon>
        <taxon>Zurhausenvirales</taxon>
        <taxon>Papillomaviridae</taxon>
        <taxon>Firstpapillomavirinae</taxon>
        <taxon>Betapapillomavirus</taxon>
        <taxon>Betapapillomavirus 1</taxon>
    </lineage>
</organism>
<reference key="1">
    <citation type="journal article" date="1987" name="Virology">
        <title>Nucleotide sequence and genome organization of human papillomavirus type 5.</title>
        <authorList>
            <person name="Zachow K.R."/>
            <person name="Ostrow R.S."/>
            <person name="Faras A.J."/>
        </authorList>
    </citation>
    <scope>NUCLEOTIDE SEQUENCE [GENOMIC DNA]</scope>
</reference>
<reference key="2">
    <citation type="journal article" date="1993" name="J. Clin. Microbiol.">
        <title>Genetic heterogeneity of oncogenic human papillomavirus type 5 (HPV5) and phylogeny of HPV5 variants associated with epidermodysplasia verruciformis.</title>
        <authorList>
            <person name="Deau M.C."/>
            <person name="Favre M."/>
            <person name="Jablonska S."/>
            <person name="Rueda L.A."/>
            <person name="Orth G."/>
        </authorList>
    </citation>
    <scope>NUCLEOTIDE SEQUENCE [GENOMIC DNA]</scope>
    <source>
        <strain>Isolate 5a2</strain>
        <strain>Isolate 5a4</strain>
        <strain>Isolate 5a5</strain>
        <strain>Isolate 5a6</strain>
    </source>
</reference>
<reference key="3">
    <citation type="submission" date="2001-07" db="EMBL/GenBank/DDBJ databases">
        <authorList>
            <person name="Mahe E."/>
            <person name="Orth G."/>
            <person name="Favre M."/>
        </authorList>
    </citation>
    <scope>NUCLEOTIDE SEQUENCE [GENOMIC DNA]</scope>
    <source>
        <strain>Isolate P5-16</strain>
    </source>
</reference>
<reference key="4">
    <citation type="journal article" date="2002" name="Rev. Med. Virol.">
        <title>Interactions of SV40 large T antigen and other viral proteins with retinoblastoma tumour suppressor.</title>
        <authorList>
            <person name="Lee C."/>
            <person name="Cho Y."/>
        </authorList>
    </citation>
    <scope>REVIEW</scope>
</reference>
<name>VE7_HPV05</name>
<proteinExistence type="inferred from homology"/>
<sequence>MIGKEVTVQDIILELSEVQPEVLPVDLFCEEELPNEQETEEEPDNERISYKVIAPCGCRNCEVKLRIFVHATEFGIRAFQQLLTGDLQLLCPDCRGNCKHDGS</sequence>
<dbReference type="EMBL" id="M17463">
    <property type="protein sequence ID" value="AAA46984.1"/>
    <property type="molecule type" value="Genomic_DNA"/>
</dbReference>
<dbReference type="EMBL" id="X74618">
    <property type="protein sequence ID" value="CAA52690.1"/>
    <property type="molecule type" value="Genomic_DNA"/>
</dbReference>
<dbReference type="EMBL" id="X74619">
    <property type="protein sequence ID" value="CAA52692.1"/>
    <property type="molecule type" value="Genomic_DNA"/>
</dbReference>
<dbReference type="EMBL" id="X74620">
    <property type="protein sequence ID" value="CAA52694.1"/>
    <property type="molecule type" value="Genomic_DNA"/>
</dbReference>
<dbReference type="EMBL" id="X74621">
    <property type="protein sequence ID" value="CAA52696.1"/>
    <property type="molecule type" value="Genomic_DNA"/>
</dbReference>
<dbReference type="EMBL" id="X74622">
    <property type="protein sequence ID" value="CAA52698.1"/>
    <property type="molecule type" value="Genomic_DNA"/>
</dbReference>
<dbReference type="EMBL" id="AY044308">
    <property type="protein sequence ID" value="AAK95795.1"/>
    <property type="molecule type" value="Genomic_DNA"/>
</dbReference>
<dbReference type="PIR" id="G26277">
    <property type="entry name" value="W7WL5"/>
</dbReference>
<dbReference type="RefSeq" id="NP_041366.1">
    <property type="nucleotide sequence ID" value="NC_001531.1"/>
</dbReference>
<dbReference type="SMR" id="P06932"/>
<dbReference type="BioGRID" id="4263588">
    <property type="interactions" value="79"/>
</dbReference>
<dbReference type="IntAct" id="P06932">
    <property type="interactions" value="59"/>
</dbReference>
<dbReference type="MINT" id="P06932"/>
<dbReference type="GeneID" id="1489048"/>
<dbReference type="KEGG" id="vg:1489048"/>
<dbReference type="OrthoDB" id="28045at10239"/>
<dbReference type="Proteomes" id="UP000009252">
    <property type="component" value="Genome"/>
</dbReference>
<dbReference type="GO" id="GO:0030430">
    <property type="term" value="C:host cell cytoplasm"/>
    <property type="evidence" value="ECO:0007669"/>
    <property type="project" value="UniProtKB-SubCell"/>
</dbReference>
<dbReference type="GO" id="GO:0042025">
    <property type="term" value="C:host cell nucleus"/>
    <property type="evidence" value="ECO:0007669"/>
    <property type="project" value="UniProtKB-SubCell"/>
</dbReference>
<dbReference type="GO" id="GO:0003677">
    <property type="term" value="F:DNA binding"/>
    <property type="evidence" value="ECO:0007669"/>
    <property type="project" value="UniProtKB-UniRule"/>
</dbReference>
<dbReference type="GO" id="GO:0003700">
    <property type="term" value="F:DNA-binding transcription factor activity"/>
    <property type="evidence" value="ECO:0007669"/>
    <property type="project" value="UniProtKB-UniRule"/>
</dbReference>
<dbReference type="GO" id="GO:0019904">
    <property type="term" value="F:protein domain specific binding"/>
    <property type="evidence" value="ECO:0007669"/>
    <property type="project" value="UniProtKB-UniRule"/>
</dbReference>
<dbReference type="GO" id="GO:0008270">
    <property type="term" value="F:zinc ion binding"/>
    <property type="evidence" value="ECO:0007669"/>
    <property type="project" value="UniProtKB-KW"/>
</dbReference>
<dbReference type="GO" id="GO:0006351">
    <property type="term" value="P:DNA-templated transcription"/>
    <property type="evidence" value="ECO:0007669"/>
    <property type="project" value="UniProtKB-UniRule"/>
</dbReference>
<dbReference type="GO" id="GO:0039645">
    <property type="term" value="P:symbiont-mediated perturbation of host cell cycle G1/S transition checkpoint"/>
    <property type="evidence" value="ECO:0007669"/>
    <property type="project" value="UniProtKB-UniRule"/>
</dbReference>
<dbReference type="GO" id="GO:0052170">
    <property type="term" value="P:symbiont-mediated suppression of host innate immune response"/>
    <property type="evidence" value="ECO:0007669"/>
    <property type="project" value="UniProtKB-KW"/>
</dbReference>
<dbReference type="GO" id="GO:0039502">
    <property type="term" value="P:symbiont-mediated suppression of host type I interferon-mediated signaling pathway"/>
    <property type="evidence" value="ECO:0007669"/>
    <property type="project" value="UniProtKB-UniRule"/>
</dbReference>
<dbReference type="Gene3D" id="3.30.160.330">
    <property type="match status" value="1"/>
</dbReference>
<dbReference type="HAMAP" id="MF_04004">
    <property type="entry name" value="PPV_E7"/>
    <property type="match status" value="1"/>
</dbReference>
<dbReference type="InterPro" id="IPR000148">
    <property type="entry name" value="Papilloma_E7"/>
</dbReference>
<dbReference type="Pfam" id="PF00527">
    <property type="entry name" value="E7"/>
    <property type="match status" value="1"/>
</dbReference>
<dbReference type="PIRSF" id="PIRSF003407">
    <property type="entry name" value="Papvi_E7"/>
    <property type="match status" value="1"/>
</dbReference>
<dbReference type="SUPFAM" id="SSF161234">
    <property type="entry name" value="E7 C-terminal domain-like"/>
    <property type="match status" value="1"/>
</dbReference>
<keyword id="KW-0010">Activator</keyword>
<keyword id="KW-0238">DNA-binding</keyword>
<keyword id="KW-0244">Early protein</keyword>
<keyword id="KW-1078">G1/S host cell cycle checkpoint dysregulation by virus</keyword>
<keyword id="KW-1035">Host cytoplasm</keyword>
<keyword id="KW-1048">Host nucleus</keyword>
<keyword id="KW-0945">Host-virus interaction</keyword>
<keyword id="KW-1090">Inhibition of host innate immune response by virus</keyword>
<keyword id="KW-1114">Inhibition of host interferon signaling pathway by virus</keyword>
<keyword id="KW-0922">Interferon antiviral system evasion</keyword>
<keyword id="KW-0479">Metal-binding</keyword>
<keyword id="KW-1121">Modulation of host cell cycle by virus</keyword>
<keyword id="KW-0553">Oncogene</keyword>
<keyword id="KW-1185">Reference proteome</keyword>
<keyword id="KW-0804">Transcription</keyword>
<keyword id="KW-0805">Transcription regulation</keyword>
<keyword id="KW-0899">Viral immunoevasion</keyword>
<keyword id="KW-0862">Zinc</keyword>
<keyword id="KW-0863">Zinc-finger</keyword>
<feature type="chain" id="PRO_0000133402" description="Protein E7">
    <location>
        <begin position="1"/>
        <end position="103"/>
    </location>
</feature>
<feature type="zinc finger region" evidence="1">
    <location>
        <begin position="56"/>
        <end position="94"/>
    </location>
</feature>
<feature type="region of interest" description="E7 terminal domain" evidence="1">
    <location>
        <begin position="1"/>
        <end position="48"/>
    </location>
</feature>
<feature type="short sequence motif" description="LXCXE motif; interaction with host RB1 and TMEM173/STING" evidence="1">
    <location>
        <begin position="27"/>
        <end position="31"/>
    </location>
</feature>
<feature type="short sequence motif" description="Nuclear export signal" evidence="1">
    <location>
        <begin position="76"/>
        <end position="84"/>
    </location>
</feature>
<feature type="sequence variant" description="In strain: Isolate 5a6.">
    <original>F</original>
    <variation>Y</variation>
    <location>
        <position position="28"/>
    </location>
</feature>
<feature type="sequence variant" description="In strain: Isolate 5a4 and Isolate 5a6.">
    <original>N</original>
    <variation>I</variation>
    <location>
        <position position="45"/>
    </location>
</feature>
<feature type="sequence variant" description="In strain: Isolate 5a5.">
    <original>S</original>
    <variation>F</variation>
    <location>
        <position position="49"/>
    </location>
</feature>
<feature type="sequence variant" description="In strain: Isolate 5a4 and Isolate 5a6.">
    <original>N</original>
    <variation>H</variation>
    <location>
        <position position="60"/>
    </location>
</feature>
<organismHost>
    <name type="scientific">Homo sapiens</name>
    <name type="common">Human</name>
    <dbReference type="NCBI Taxonomy" id="9606"/>
</organismHost>